<gene>
    <name evidence="1" type="primary">atpD</name>
    <name type="ordered locus">FN0358</name>
</gene>
<comment type="function">
    <text evidence="1">Produces ATP from ADP in the presence of a proton gradient across the membrane. The catalytic sites are hosted primarily by the beta subunits.</text>
</comment>
<comment type="catalytic activity">
    <reaction evidence="1">
        <text>ATP + H2O + 4 H(+)(in) = ADP + phosphate + 5 H(+)(out)</text>
        <dbReference type="Rhea" id="RHEA:57720"/>
        <dbReference type="ChEBI" id="CHEBI:15377"/>
        <dbReference type="ChEBI" id="CHEBI:15378"/>
        <dbReference type="ChEBI" id="CHEBI:30616"/>
        <dbReference type="ChEBI" id="CHEBI:43474"/>
        <dbReference type="ChEBI" id="CHEBI:456216"/>
        <dbReference type="EC" id="7.1.2.2"/>
    </reaction>
</comment>
<comment type="subunit">
    <text evidence="1">F-type ATPases have 2 components, CF(1) - the catalytic core - and CF(0) - the membrane proton channel. CF(1) has five subunits: alpha(3), beta(3), gamma(1), delta(1), epsilon(1). CF(0) has three main subunits: a(1), b(2) and c(9-12). The alpha and beta chains form an alternating ring which encloses part of the gamma chain. CF(1) is attached to CF(0) by a central stalk formed by the gamma and epsilon chains, while a peripheral stalk is formed by the delta and b chains.</text>
</comment>
<comment type="subcellular location">
    <subcellularLocation>
        <location evidence="1">Cell inner membrane</location>
        <topology evidence="1">Peripheral membrane protein</topology>
    </subcellularLocation>
</comment>
<comment type="similarity">
    <text evidence="1">Belongs to the ATPase alpha/beta chains family.</text>
</comment>
<reference key="1">
    <citation type="journal article" date="2002" name="J. Bacteriol.">
        <title>Genome sequence and analysis of the oral bacterium Fusobacterium nucleatum strain ATCC 25586.</title>
        <authorList>
            <person name="Kapatral V."/>
            <person name="Anderson I."/>
            <person name="Ivanova N."/>
            <person name="Reznik G."/>
            <person name="Los T."/>
            <person name="Lykidis A."/>
            <person name="Bhattacharyya A."/>
            <person name="Bartman A."/>
            <person name="Gardner W."/>
            <person name="Grechkin G."/>
            <person name="Zhu L."/>
            <person name="Vasieva O."/>
            <person name="Chu L."/>
            <person name="Kogan Y."/>
            <person name="Chaga O."/>
            <person name="Goltsman E."/>
            <person name="Bernal A."/>
            <person name="Larsen N."/>
            <person name="D'Souza M."/>
            <person name="Walunas T."/>
            <person name="Pusch G."/>
            <person name="Haselkorn R."/>
            <person name="Fonstein M."/>
            <person name="Kyrpides N.C."/>
            <person name="Overbeek R."/>
        </authorList>
    </citation>
    <scope>NUCLEOTIDE SEQUENCE [LARGE SCALE GENOMIC DNA]</scope>
    <source>
        <strain>ATCC 25586 / DSM 15643 / BCRC 10681 / CIP 101130 / JCM 8532 / KCTC 2640 / LMG 13131 / VPI 4355</strain>
    </source>
</reference>
<evidence type="ECO:0000255" key="1">
    <source>
        <dbReference type="HAMAP-Rule" id="MF_01347"/>
    </source>
</evidence>
<keyword id="KW-0002">3D-structure</keyword>
<keyword id="KW-0066">ATP synthesis</keyword>
<keyword id="KW-0067">ATP-binding</keyword>
<keyword id="KW-0997">Cell inner membrane</keyword>
<keyword id="KW-1003">Cell membrane</keyword>
<keyword id="KW-0139">CF(1)</keyword>
<keyword id="KW-0375">Hydrogen ion transport</keyword>
<keyword id="KW-0406">Ion transport</keyword>
<keyword id="KW-0472">Membrane</keyword>
<keyword id="KW-0547">Nucleotide-binding</keyword>
<keyword id="KW-1185">Reference proteome</keyword>
<keyword id="KW-1278">Translocase</keyword>
<keyword id="KW-0813">Transport</keyword>
<proteinExistence type="evidence at protein level"/>
<organism>
    <name type="scientific">Fusobacterium nucleatum subsp. nucleatum (strain ATCC 25586 / DSM 15643 / BCRC 10681 / CIP 101130 / JCM 8532 / KCTC 2640 / LMG 13131 / VPI 4355)</name>
    <dbReference type="NCBI Taxonomy" id="190304"/>
    <lineage>
        <taxon>Bacteria</taxon>
        <taxon>Fusobacteriati</taxon>
        <taxon>Fusobacteriota</taxon>
        <taxon>Fusobacteriia</taxon>
        <taxon>Fusobacteriales</taxon>
        <taxon>Fusobacteriaceae</taxon>
        <taxon>Fusobacterium</taxon>
    </lineage>
</organism>
<feature type="chain" id="PRO_0000254266" description="ATP synthase subunit beta">
    <location>
        <begin position="1"/>
        <end position="462"/>
    </location>
</feature>
<feature type="binding site" evidence="1">
    <location>
        <begin position="149"/>
        <end position="156"/>
    </location>
    <ligand>
        <name>ATP</name>
        <dbReference type="ChEBI" id="CHEBI:30616"/>
    </ligand>
</feature>
<name>ATPB_FUSNN</name>
<sequence length="462" mass="50219">MNKGTITQIISAVVDIAFKDELPAIYNALKVKLEDKELVLEVEQHLGNNVVRTVAMDSTDGLKRGMEVIDTGKPITIPVGKAVLGRILNVLGEPVDNQGPLNAETFLPIHREAPEFDDLETETEIFETGIKVIDLLAPYIKGGKIGLFGGAGVGKTVLIMELINNIAKGHGGISVFAGVGERTREGRDLYGEMTESGVITKTALVYGQMNEPPGARLRVALTGLTVAENFRDKDGQDVLLFIDNIFRFTQAGSEVSALLGRIPSAVGYQPNLATEMGALQERITSTKSGSITSVQAVYVPADDLTDPAPATTFSHLDATTVLSRNIASLGIYPAVDPLDSTSKALSEDVVGKEHYEVARKVQEVLQRYKELQDIIAILGMDELSDEDKLTVSRARKIERFFSQPFSVAEQFTGMEGKYVPVKETIRGFREILEGKHDDIPEQAFLYVGTIEEAVAKSKDLAK</sequence>
<dbReference type="EC" id="7.1.2.2" evidence="1"/>
<dbReference type="EMBL" id="AE009951">
    <property type="protein sequence ID" value="AAL94561.1"/>
    <property type="molecule type" value="Genomic_DNA"/>
</dbReference>
<dbReference type="RefSeq" id="NP_603262.1">
    <property type="nucleotide sequence ID" value="NC_003454.1"/>
</dbReference>
<dbReference type="RefSeq" id="WP_011016335.1">
    <property type="nucleotide sequence ID" value="NZ_CP028101.1"/>
</dbReference>
<dbReference type="PDB" id="6Q45">
    <property type="method" value="X-ray"/>
    <property type="resolution" value="3.60 A"/>
    <property type="chains" value="D/E/F/L/M/N=1-462"/>
</dbReference>
<dbReference type="PDBsum" id="6Q45"/>
<dbReference type="SMR" id="Q8RGE2"/>
<dbReference type="DIP" id="DIP-60175N"/>
<dbReference type="FunCoup" id="Q8RGE2">
    <property type="interactions" value="262"/>
</dbReference>
<dbReference type="IntAct" id="Q8RGE2">
    <property type="interactions" value="1"/>
</dbReference>
<dbReference type="STRING" id="190304.FN0358"/>
<dbReference type="PaxDb" id="190304-FN0358"/>
<dbReference type="EnsemblBacteria" id="AAL94561">
    <property type="protein sequence ID" value="AAL94561"/>
    <property type="gene ID" value="FN0358"/>
</dbReference>
<dbReference type="GeneID" id="79783367"/>
<dbReference type="KEGG" id="fnu:FN0358"/>
<dbReference type="PATRIC" id="fig|190304.8.peg.935"/>
<dbReference type="eggNOG" id="COG0055">
    <property type="taxonomic scope" value="Bacteria"/>
</dbReference>
<dbReference type="HOGENOM" id="CLU_022398_0_2_0"/>
<dbReference type="InParanoid" id="Q8RGE2"/>
<dbReference type="BioCyc" id="FNUC190304:G1FZS-955-MONOMER"/>
<dbReference type="Proteomes" id="UP000002521">
    <property type="component" value="Chromosome"/>
</dbReference>
<dbReference type="GO" id="GO:0005886">
    <property type="term" value="C:plasma membrane"/>
    <property type="evidence" value="ECO:0007669"/>
    <property type="project" value="UniProtKB-SubCell"/>
</dbReference>
<dbReference type="GO" id="GO:0045259">
    <property type="term" value="C:proton-transporting ATP synthase complex"/>
    <property type="evidence" value="ECO:0007669"/>
    <property type="project" value="UniProtKB-KW"/>
</dbReference>
<dbReference type="GO" id="GO:0005524">
    <property type="term" value="F:ATP binding"/>
    <property type="evidence" value="ECO:0007669"/>
    <property type="project" value="UniProtKB-UniRule"/>
</dbReference>
<dbReference type="GO" id="GO:0016887">
    <property type="term" value="F:ATP hydrolysis activity"/>
    <property type="evidence" value="ECO:0007669"/>
    <property type="project" value="InterPro"/>
</dbReference>
<dbReference type="GO" id="GO:0046933">
    <property type="term" value="F:proton-transporting ATP synthase activity, rotational mechanism"/>
    <property type="evidence" value="ECO:0007669"/>
    <property type="project" value="UniProtKB-UniRule"/>
</dbReference>
<dbReference type="CDD" id="cd18110">
    <property type="entry name" value="ATP-synt_F1_beta_C"/>
    <property type="match status" value="1"/>
</dbReference>
<dbReference type="CDD" id="cd18115">
    <property type="entry name" value="ATP-synt_F1_beta_N"/>
    <property type="match status" value="1"/>
</dbReference>
<dbReference type="CDD" id="cd01133">
    <property type="entry name" value="F1-ATPase_beta_CD"/>
    <property type="match status" value="1"/>
</dbReference>
<dbReference type="FunFam" id="1.10.1140.10:FF:000001">
    <property type="entry name" value="ATP synthase subunit beta"/>
    <property type="match status" value="1"/>
</dbReference>
<dbReference type="FunFam" id="2.40.10.170:FF:000014">
    <property type="entry name" value="ATP synthase subunit beta"/>
    <property type="match status" value="1"/>
</dbReference>
<dbReference type="FunFam" id="3.40.50.300:FF:000026">
    <property type="entry name" value="ATP synthase subunit beta"/>
    <property type="match status" value="1"/>
</dbReference>
<dbReference type="Gene3D" id="2.40.10.170">
    <property type="match status" value="1"/>
</dbReference>
<dbReference type="Gene3D" id="1.10.1140.10">
    <property type="entry name" value="Bovine Mitochondrial F1-atpase, Atp Synthase Beta Chain, Chain D, domain 3"/>
    <property type="match status" value="1"/>
</dbReference>
<dbReference type="Gene3D" id="3.40.50.300">
    <property type="entry name" value="P-loop containing nucleotide triphosphate hydrolases"/>
    <property type="match status" value="1"/>
</dbReference>
<dbReference type="HAMAP" id="MF_01347">
    <property type="entry name" value="ATP_synth_beta_bact"/>
    <property type="match status" value="1"/>
</dbReference>
<dbReference type="InterPro" id="IPR003593">
    <property type="entry name" value="AAA+_ATPase"/>
</dbReference>
<dbReference type="InterPro" id="IPR055190">
    <property type="entry name" value="ATP-synt_VA_C"/>
</dbReference>
<dbReference type="InterPro" id="IPR005722">
    <property type="entry name" value="ATP_synth_F1_bsu"/>
</dbReference>
<dbReference type="InterPro" id="IPR020003">
    <property type="entry name" value="ATPase_a/bsu_AS"/>
</dbReference>
<dbReference type="InterPro" id="IPR050053">
    <property type="entry name" value="ATPase_alpha/beta_chains"/>
</dbReference>
<dbReference type="InterPro" id="IPR004100">
    <property type="entry name" value="ATPase_F1/V1/A1_a/bsu_N"/>
</dbReference>
<dbReference type="InterPro" id="IPR036121">
    <property type="entry name" value="ATPase_F1/V1/A1_a/bsu_N_sf"/>
</dbReference>
<dbReference type="InterPro" id="IPR000194">
    <property type="entry name" value="ATPase_F1/V1/A1_a/bsu_nucl-bd"/>
</dbReference>
<dbReference type="InterPro" id="IPR024034">
    <property type="entry name" value="ATPase_F1/V1_b/a_C"/>
</dbReference>
<dbReference type="InterPro" id="IPR027417">
    <property type="entry name" value="P-loop_NTPase"/>
</dbReference>
<dbReference type="NCBIfam" id="TIGR01039">
    <property type="entry name" value="atpD"/>
    <property type="match status" value="1"/>
</dbReference>
<dbReference type="PANTHER" id="PTHR15184">
    <property type="entry name" value="ATP SYNTHASE"/>
    <property type="match status" value="1"/>
</dbReference>
<dbReference type="PANTHER" id="PTHR15184:SF71">
    <property type="entry name" value="ATP SYNTHASE SUBUNIT BETA, MITOCHONDRIAL"/>
    <property type="match status" value="1"/>
</dbReference>
<dbReference type="Pfam" id="PF00006">
    <property type="entry name" value="ATP-synt_ab"/>
    <property type="match status" value="1"/>
</dbReference>
<dbReference type="Pfam" id="PF02874">
    <property type="entry name" value="ATP-synt_ab_N"/>
    <property type="match status" value="1"/>
</dbReference>
<dbReference type="Pfam" id="PF22919">
    <property type="entry name" value="ATP-synt_VA_C"/>
    <property type="match status" value="1"/>
</dbReference>
<dbReference type="PIRSF" id="PIRSF039072">
    <property type="entry name" value="ATPase_subunit_beta"/>
    <property type="match status" value="1"/>
</dbReference>
<dbReference type="SMART" id="SM00382">
    <property type="entry name" value="AAA"/>
    <property type="match status" value="1"/>
</dbReference>
<dbReference type="SUPFAM" id="SSF47917">
    <property type="entry name" value="C-terminal domain of alpha and beta subunits of F1 ATP synthase"/>
    <property type="match status" value="1"/>
</dbReference>
<dbReference type="SUPFAM" id="SSF50615">
    <property type="entry name" value="N-terminal domain of alpha and beta subunits of F1 ATP synthase"/>
    <property type="match status" value="1"/>
</dbReference>
<dbReference type="SUPFAM" id="SSF52540">
    <property type="entry name" value="P-loop containing nucleoside triphosphate hydrolases"/>
    <property type="match status" value="1"/>
</dbReference>
<dbReference type="PROSITE" id="PS00152">
    <property type="entry name" value="ATPASE_ALPHA_BETA"/>
    <property type="match status" value="1"/>
</dbReference>
<protein>
    <recommendedName>
        <fullName evidence="1">ATP synthase subunit beta</fullName>
        <ecNumber evidence="1">7.1.2.2</ecNumber>
    </recommendedName>
    <alternativeName>
        <fullName evidence="1">ATP synthase F1 sector subunit beta</fullName>
    </alternativeName>
    <alternativeName>
        <fullName evidence="1">F-ATPase subunit beta</fullName>
    </alternativeName>
</protein>
<accession>Q8RGE2</accession>